<sequence length="250" mass="28588">MAVTKLVLVRHGESQWNKENRFTGWYDVDLSEKGVSEAKAAGKLLKEEGYSFDFAYTSVLKRAIHTLWNVLDELDQAWLPVEKSWKLNERHYGALQGLNKAETAEKYGDEQVKQWRRGFAVTPPELTKDDERYPGHDPRYAKLSEKELPLTESLALTIDRVIPYWNETILPRMKSGERVIIAAHGNSLRALVKYLDNMSEEEILELNIPTGVPLMYEFDENFKPLKRYYLGNADEIAAKAAAVANQGKAK</sequence>
<gene>
    <name evidence="1" type="primary">gpmA</name>
    <name type="ordered locus">EcE24377A_0782</name>
</gene>
<feature type="chain" id="PRO_1000064054" description="2,3-bisphosphoglycerate-dependent phosphoglycerate mutase">
    <location>
        <begin position="1"/>
        <end position="250"/>
    </location>
</feature>
<feature type="active site" description="Tele-phosphohistidine intermediate" evidence="1">
    <location>
        <position position="11"/>
    </location>
</feature>
<feature type="active site" description="Proton donor/acceptor" evidence="1">
    <location>
        <position position="89"/>
    </location>
</feature>
<feature type="binding site" evidence="1">
    <location>
        <begin position="10"/>
        <end position="17"/>
    </location>
    <ligand>
        <name>substrate</name>
    </ligand>
</feature>
<feature type="binding site" evidence="1">
    <location>
        <begin position="23"/>
        <end position="24"/>
    </location>
    <ligand>
        <name>substrate</name>
    </ligand>
</feature>
<feature type="binding site" evidence="1">
    <location>
        <position position="62"/>
    </location>
    <ligand>
        <name>substrate</name>
    </ligand>
</feature>
<feature type="binding site" evidence="1">
    <location>
        <begin position="89"/>
        <end position="92"/>
    </location>
    <ligand>
        <name>substrate</name>
    </ligand>
</feature>
<feature type="binding site" evidence="1">
    <location>
        <position position="100"/>
    </location>
    <ligand>
        <name>substrate</name>
    </ligand>
</feature>
<feature type="binding site" evidence="1">
    <location>
        <begin position="116"/>
        <end position="117"/>
    </location>
    <ligand>
        <name>substrate</name>
    </ligand>
</feature>
<feature type="binding site" evidence="1">
    <location>
        <begin position="185"/>
        <end position="186"/>
    </location>
    <ligand>
        <name>substrate</name>
    </ligand>
</feature>
<feature type="site" description="Transition state stabilizer" evidence="1">
    <location>
        <position position="184"/>
    </location>
</feature>
<reference key="1">
    <citation type="journal article" date="2008" name="J. Bacteriol.">
        <title>The pangenome structure of Escherichia coli: comparative genomic analysis of E. coli commensal and pathogenic isolates.</title>
        <authorList>
            <person name="Rasko D.A."/>
            <person name="Rosovitz M.J."/>
            <person name="Myers G.S.A."/>
            <person name="Mongodin E.F."/>
            <person name="Fricke W.F."/>
            <person name="Gajer P."/>
            <person name="Crabtree J."/>
            <person name="Sebaihia M."/>
            <person name="Thomson N.R."/>
            <person name="Chaudhuri R."/>
            <person name="Henderson I.R."/>
            <person name="Sperandio V."/>
            <person name="Ravel J."/>
        </authorList>
    </citation>
    <scope>NUCLEOTIDE SEQUENCE [LARGE SCALE GENOMIC DNA]</scope>
    <source>
        <strain>E24377A / ETEC</strain>
    </source>
</reference>
<evidence type="ECO:0000255" key="1">
    <source>
        <dbReference type="HAMAP-Rule" id="MF_01039"/>
    </source>
</evidence>
<dbReference type="EC" id="5.4.2.11" evidence="1"/>
<dbReference type="EMBL" id="CP000800">
    <property type="protein sequence ID" value="ABV17240.1"/>
    <property type="molecule type" value="Genomic_DNA"/>
</dbReference>
<dbReference type="RefSeq" id="WP_012137807.1">
    <property type="nucleotide sequence ID" value="NC_009801.1"/>
</dbReference>
<dbReference type="SMR" id="A7ZJD0"/>
<dbReference type="KEGG" id="ecw:EcE24377A_0782"/>
<dbReference type="HOGENOM" id="CLU_033323_1_1_6"/>
<dbReference type="UniPathway" id="UPA00109">
    <property type="reaction ID" value="UER00186"/>
</dbReference>
<dbReference type="Proteomes" id="UP000001122">
    <property type="component" value="Chromosome"/>
</dbReference>
<dbReference type="GO" id="GO:0004619">
    <property type="term" value="F:phosphoglycerate mutase activity"/>
    <property type="evidence" value="ECO:0007669"/>
    <property type="project" value="UniProtKB-EC"/>
</dbReference>
<dbReference type="GO" id="GO:0006094">
    <property type="term" value="P:gluconeogenesis"/>
    <property type="evidence" value="ECO:0007669"/>
    <property type="project" value="UniProtKB-UniRule"/>
</dbReference>
<dbReference type="GO" id="GO:0006096">
    <property type="term" value="P:glycolytic process"/>
    <property type="evidence" value="ECO:0007669"/>
    <property type="project" value="UniProtKB-UniRule"/>
</dbReference>
<dbReference type="CDD" id="cd07067">
    <property type="entry name" value="HP_PGM_like"/>
    <property type="match status" value="1"/>
</dbReference>
<dbReference type="FunFam" id="3.40.50.1240:FF:000003">
    <property type="entry name" value="2,3-bisphosphoglycerate-dependent phosphoglycerate mutase"/>
    <property type="match status" value="1"/>
</dbReference>
<dbReference type="Gene3D" id="3.40.50.1240">
    <property type="entry name" value="Phosphoglycerate mutase-like"/>
    <property type="match status" value="1"/>
</dbReference>
<dbReference type="HAMAP" id="MF_01039">
    <property type="entry name" value="PGAM_GpmA"/>
    <property type="match status" value="1"/>
</dbReference>
<dbReference type="InterPro" id="IPR013078">
    <property type="entry name" value="His_Pase_superF_clade-1"/>
</dbReference>
<dbReference type="InterPro" id="IPR029033">
    <property type="entry name" value="His_PPase_superfam"/>
</dbReference>
<dbReference type="InterPro" id="IPR001345">
    <property type="entry name" value="PG/BPGM_mutase_AS"/>
</dbReference>
<dbReference type="InterPro" id="IPR005952">
    <property type="entry name" value="Phosphogly_mut1"/>
</dbReference>
<dbReference type="NCBIfam" id="TIGR01258">
    <property type="entry name" value="pgm_1"/>
    <property type="match status" value="1"/>
</dbReference>
<dbReference type="NCBIfam" id="NF010713">
    <property type="entry name" value="PRK14115.1"/>
    <property type="match status" value="1"/>
</dbReference>
<dbReference type="PANTHER" id="PTHR11931">
    <property type="entry name" value="PHOSPHOGLYCERATE MUTASE"/>
    <property type="match status" value="1"/>
</dbReference>
<dbReference type="Pfam" id="PF00300">
    <property type="entry name" value="His_Phos_1"/>
    <property type="match status" value="1"/>
</dbReference>
<dbReference type="PIRSF" id="PIRSF000709">
    <property type="entry name" value="6PFK_2-Ptase"/>
    <property type="match status" value="1"/>
</dbReference>
<dbReference type="SMART" id="SM00855">
    <property type="entry name" value="PGAM"/>
    <property type="match status" value="1"/>
</dbReference>
<dbReference type="SUPFAM" id="SSF53254">
    <property type="entry name" value="Phosphoglycerate mutase-like"/>
    <property type="match status" value="1"/>
</dbReference>
<dbReference type="PROSITE" id="PS00175">
    <property type="entry name" value="PG_MUTASE"/>
    <property type="match status" value="1"/>
</dbReference>
<name>GPMA_ECO24</name>
<keyword id="KW-0312">Gluconeogenesis</keyword>
<keyword id="KW-0324">Glycolysis</keyword>
<keyword id="KW-0413">Isomerase</keyword>
<keyword id="KW-1185">Reference proteome</keyword>
<comment type="function">
    <text evidence="1">Catalyzes the interconversion of 2-phosphoglycerate and 3-phosphoglycerate.</text>
</comment>
<comment type="catalytic activity">
    <reaction evidence="1">
        <text>(2R)-2-phosphoglycerate = (2R)-3-phosphoglycerate</text>
        <dbReference type="Rhea" id="RHEA:15901"/>
        <dbReference type="ChEBI" id="CHEBI:58272"/>
        <dbReference type="ChEBI" id="CHEBI:58289"/>
        <dbReference type="EC" id="5.4.2.11"/>
    </reaction>
</comment>
<comment type="pathway">
    <text evidence="1">Carbohydrate degradation; glycolysis; pyruvate from D-glyceraldehyde 3-phosphate: step 3/5.</text>
</comment>
<comment type="subunit">
    <text evidence="1">Homodimer.</text>
</comment>
<comment type="similarity">
    <text evidence="1">Belongs to the phosphoglycerate mutase family. BPG-dependent PGAM subfamily.</text>
</comment>
<proteinExistence type="inferred from homology"/>
<protein>
    <recommendedName>
        <fullName evidence="1">2,3-bisphosphoglycerate-dependent phosphoglycerate mutase</fullName>
        <shortName evidence="1">BPG-dependent PGAM</shortName>
        <shortName evidence="1">PGAM</shortName>
        <shortName evidence="1">Phosphoglyceromutase</shortName>
        <shortName evidence="1">dPGM</shortName>
        <ecNumber evidence="1">5.4.2.11</ecNumber>
    </recommendedName>
</protein>
<accession>A7ZJD0</accession>
<organism>
    <name type="scientific">Escherichia coli O139:H28 (strain E24377A / ETEC)</name>
    <dbReference type="NCBI Taxonomy" id="331111"/>
    <lineage>
        <taxon>Bacteria</taxon>
        <taxon>Pseudomonadati</taxon>
        <taxon>Pseudomonadota</taxon>
        <taxon>Gammaproteobacteria</taxon>
        <taxon>Enterobacterales</taxon>
        <taxon>Enterobacteriaceae</taxon>
        <taxon>Escherichia</taxon>
    </lineage>
</organism>